<keyword id="KW-0175">Coiled coil</keyword>
<keyword id="KW-1185">Reference proteome</keyword>
<protein>
    <recommendedName>
        <fullName>Differentially expressed in FDCP 6 homolog</fullName>
    </recommendedName>
</protein>
<proteinExistence type="evidence at transcript level"/>
<organism>
    <name type="scientific">Xenopus laevis</name>
    <name type="common">African clawed frog</name>
    <dbReference type="NCBI Taxonomy" id="8355"/>
    <lineage>
        <taxon>Eukaryota</taxon>
        <taxon>Metazoa</taxon>
        <taxon>Chordata</taxon>
        <taxon>Craniata</taxon>
        <taxon>Vertebrata</taxon>
        <taxon>Euteleostomi</taxon>
        <taxon>Amphibia</taxon>
        <taxon>Batrachia</taxon>
        <taxon>Anura</taxon>
        <taxon>Pipoidea</taxon>
        <taxon>Pipidae</taxon>
        <taxon>Xenopodinae</taxon>
        <taxon>Xenopus</taxon>
        <taxon>Xenopus</taxon>
    </lineage>
</organism>
<name>DEFI6_XENLA</name>
<accession>Q6PA69</accession>
<gene>
    <name type="primary">def6</name>
</gene>
<feature type="chain" id="PRO_0000294525" description="Differentially expressed in FDCP 6 homolog">
    <location>
        <begin position="1"/>
        <end position="596"/>
    </location>
</feature>
<feature type="domain" description="PH" evidence="2">
    <location>
        <begin position="207"/>
        <end position="303"/>
    </location>
</feature>
<feature type="coiled-coil region" evidence="1">
    <location>
        <begin position="311"/>
        <end position="541"/>
    </location>
</feature>
<dbReference type="EMBL" id="BC060433">
    <property type="protein sequence ID" value="AAH60433.1"/>
    <property type="molecule type" value="mRNA"/>
</dbReference>
<dbReference type="RefSeq" id="NP_001083435.1">
    <property type="nucleotide sequence ID" value="NM_001089966.1"/>
</dbReference>
<dbReference type="SMR" id="Q6PA69"/>
<dbReference type="DNASU" id="398924"/>
<dbReference type="GeneID" id="398924"/>
<dbReference type="KEGG" id="xla:398924"/>
<dbReference type="AGR" id="Xenbase:XB-GENE-5796690"/>
<dbReference type="CTD" id="398924"/>
<dbReference type="Xenbase" id="XB-GENE-5796690">
    <property type="gene designation" value="def6.L"/>
</dbReference>
<dbReference type="OrthoDB" id="8434295at2759"/>
<dbReference type="Proteomes" id="UP000186698">
    <property type="component" value="Chromosome 2L"/>
</dbReference>
<dbReference type="Bgee" id="398924">
    <property type="expression patterns" value="Expressed in spleen and 11 other cell types or tissues"/>
</dbReference>
<dbReference type="GO" id="GO:0005737">
    <property type="term" value="C:cytoplasm"/>
    <property type="evidence" value="ECO:0000318"/>
    <property type="project" value="GO_Central"/>
</dbReference>
<dbReference type="GO" id="GO:0005634">
    <property type="term" value="C:nucleus"/>
    <property type="evidence" value="ECO:0000318"/>
    <property type="project" value="GO_Central"/>
</dbReference>
<dbReference type="CDD" id="cd13273">
    <property type="entry name" value="PH_SWAP-70"/>
    <property type="match status" value="1"/>
</dbReference>
<dbReference type="FunFam" id="2.30.29.30:FF:000286">
    <property type="entry name" value="PH-protein kinase domain containing protein"/>
    <property type="match status" value="1"/>
</dbReference>
<dbReference type="Gene3D" id="2.30.29.30">
    <property type="entry name" value="Pleckstrin-homology domain (PH domain)/Phosphotyrosine-binding domain (PTB)"/>
    <property type="match status" value="1"/>
</dbReference>
<dbReference type="InterPro" id="IPR011992">
    <property type="entry name" value="EF-hand-dom_pair"/>
</dbReference>
<dbReference type="InterPro" id="IPR011993">
    <property type="entry name" value="PH-like_dom_sf"/>
</dbReference>
<dbReference type="InterPro" id="IPR001849">
    <property type="entry name" value="PH_domain"/>
</dbReference>
<dbReference type="PANTHER" id="PTHR14383:SF2">
    <property type="entry name" value="DIFFERENTIALLY EXPRESSED IN FDCP 6 HOMOLOG"/>
    <property type="match status" value="1"/>
</dbReference>
<dbReference type="PANTHER" id="PTHR14383">
    <property type="entry name" value="SWAP-70 RECOMBINASE"/>
    <property type="match status" value="1"/>
</dbReference>
<dbReference type="Pfam" id="PF00169">
    <property type="entry name" value="PH"/>
    <property type="match status" value="1"/>
</dbReference>
<dbReference type="SMART" id="SM00233">
    <property type="entry name" value="PH"/>
    <property type="match status" value="1"/>
</dbReference>
<dbReference type="SUPFAM" id="SSF47473">
    <property type="entry name" value="EF-hand"/>
    <property type="match status" value="1"/>
</dbReference>
<dbReference type="SUPFAM" id="SSF50729">
    <property type="entry name" value="PH domain-like"/>
    <property type="match status" value="1"/>
</dbReference>
<dbReference type="PROSITE" id="PS50003">
    <property type="entry name" value="PH_DOMAIN"/>
    <property type="match status" value="1"/>
</dbReference>
<sequence length="596" mass="70172">MSLRTELLKSVWYAFTSLDTEKSGKVSKSQLKVLSHNLYTVLCIPHDPVALEDHFRDDDDGPVSSQGYMPYLNQYILDKAVEGTFVKESLHELCWTLTAKKNYRPVQTALSNRDAFHLWCLFNYLSEDSYPVIMVADEVQYLLQKLLSIALMEVTEVELGDVLSSLSPVVTVWEFLQVMTSPKFLKSMSTETLSIAIQDLYEEVIQDVLKQGYLLKKANLRRTWTERWFILKPSSLGYYLSEECKERKGIITIDKDCGVEILPDRDGRRCMFCVKTTSKTHEMCASDTKHRQEWVTAIQTAIRLQQSGSLSLHRELQKRRREQRELREQRRAARELEMQRLAELQNEKERQQQELEQLREAQKKSEEIMLQEQHRHREQQEEMKRQLECQLREAEEARASMQAEMQLKETEAVQQKQRIQELEQLQDHLQEALAQEIRARHDEEAFRHAQSKLLMQEEEKLRVLLRMREEQTQYVERAQKEKQELQQEMAVTSKELQEAQKQLEDVRENRERADRDVQVAQKKLRQASTNVRHWNIQMNRLMHPISPGEKRIVSGSGFQGLWGIPFTRRDSSLKRLQTLDGKDHTHPAGEHVETFH</sequence>
<evidence type="ECO:0000255" key="1"/>
<evidence type="ECO:0000255" key="2">
    <source>
        <dbReference type="PROSITE-ProRule" id="PRU00145"/>
    </source>
</evidence>
<reference key="1">
    <citation type="submission" date="2003-10" db="EMBL/GenBank/DDBJ databases">
        <authorList>
            <consortium name="NIH - Xenopus Gene Collection (XGC) project"/>
        </authorList>
    </citation>
    <scope>NUCLEOTIDE SEQUENCE [LARGE SCALE MRNA]</scope>
    <source>
        <tissue>Spleen</tissue>
    </source>
</reference>